<dbReference type="EMBL" id="AF150112">
    <property type="protein sequence ID" value="AAD40018.1"/>
    <property type="molecule type" value="mRNA"/>
</dbReference>
<dbReference type="PIR" id="T51189">
    <property type="entry name" value="T51189"/>
</dbReference>
<dbReference type="SMR" id="Q9XGX8"/>
<dbReference type="GO" id="GO:0005743">
    <property type="term" value="C:mitochondrial inner membrane"/>
    <property type="evidence" value="ECO:0007669"/>
    <property type="project" value="UniProtKB-SubCell"/>
</dbReference>
<dbReference type="GO" id="GO:0046872">
    <property type="term" value="F:metal ion binding"/>
    <property type="evidence" value="ECO:0007669"/>
    <property type="project" value="UniProtKB-KW"/>
</dbReference>
<dbReference type="GO" id="GO:0015031">
    <property type="term" value="P:protein transport"/>
    <property type="evidence" value="ECO:0007669"/>
    <property type="project" value="UniProtKB-KW"/>
</dbReference>
<dbReference type="FunFam" id="1.10.287.810:FF:000008">
    <property type="entry name" value="Mitochondrial import inner membrane translocase subunit TIM9"/>
    <property type="match status" value="1"/>
</dbReference>
<dbReference type="Gene3D" id="1.10.287.810">
    <property type="entry name" value="Mitochondrial import inner membrane translocase subunit tim13 like domains"/>
    <property type="match status" value="1"/>
</dbReference>
<dbReference type="InterPro" id="IPR050673">
    <property type="entry name" value="Mito_inner_translocase_sub"/>
</dbReference>
<dbReference type="InterPro" id="IPR004217">
    <property type="entry name" value="Tim10-like"/>
</dbReference>
<dbReference type="InterPro" id="IPR035427">
    <property type="entry name" value="Tim10-like_dom_sf"/>
</dbReference>
<dbReference type="PANTHER" id="PTHR13172">
    <property type="entry name" value="MITOCHONDRIAL IMPORT INNER MEMBRANE TRANSLOCASE SUBUNIT TIM9B"/>
    <property type="match status" value="1"/>
</dbReference>
<dbReference type="Pfam" id="PF02953">
    <property type="entry name" value="zf-Tim10_DDP"/>
    <property type="match status" value="1"/>
</dbReference>
<dbReference type="SUPFAM" id="SSF144122">
    <property type="entry name" value="Tim10-like"/>
    <property type="match status" value="1"/>
</dbReference>
<protein>
    <recommendedName>
        <fullName>Mitochondrial import inner membrane translocase subunit Tim9</fullName>
    </recommendedName>
</protein>
<feature type="chain" id="PRO_0000193606" description="Mitochondrial import inner membrane translocase subunit Tim9">
    <location>
        <begin position="1"/>
        <end position="93"/>
    </location>
</feature>
<feature type="short sequence motif" description="Twin CX3C motif">
    <location>
        <begin position="43"/>
        <end position="67"/>
    </location>
</feature>
<feature type="disulfide bond" evidence="1">
    <location>
        <begin position="43"/>
        <end position="67"/>
    </location>
</feature>
<feature type="disulfide bond" evidence="1">
    <location>
        <begin position="47"/>
        <end position="63"/>
    </location>
</feature>
<comment type="function">
    <text evidence="1">Mitochondrial intermembrane chaperone that participates in the import and insertion of multi-pass transmembrane proteins into the mitochondrial inner membrane. May also be required for the transfer of beta-barrel precursors from the TOM complex to the sorting and assembly machinery (SAM complex) of the outer membrane. Acts as a chaperone-like protein that protects the hydrophobic precursors from aggregation and guide them through the mitochondrial intermembrane space (By similarity).</text>
</comment>
<comment type="subunit">
    <text evidence="1">Heterohexamer; composed of 3 copies of TIM9 and 3 copies of TIM10, named soluble 70 kDa complex. The complex associates with the TIM22 component of the TIM22 complex. Interacts with multi-pass transmembrane proteins in transit (By similarity).</text>
</comment>
<comment type="subcellular location">
    <subcellularLocation>
        <location evidence="1">Mitochondrion inner membrane</location>
        <topology evidence="1">Peripheral membrane protein</topology>
        <orientation evidence="1">Intermembrane side</orientation>
    </subcellularLocation>
</comment>
<comment type="domain">
    <text evidence="1">The twin CX3C motif contains 4 conserved Cys residues that form 2 disulfide bonds in the mitochondrial intermembrane space. However, during the transit of TIM9 from cytoplasm into mitochondrion, the Cys residues probably coordinate zinc, thereby preventing folding and allowing its transfer across mitochondrial outer membrane (By similarity).</text>
</comment>
<comment type="similarity">
    <text evidence="2">Belongs to the small Tim family.</text>
</comment>
<sequence length="93" mass="10879">MDKNMLGDLDNLPEEDKLKMASMIEQLQIRDSLRMYNNLVERCFTDCVDSFRRKTLDKQEETCVKRCAEKFLKHSMRVGLRFAELNQGAATTD</sequence>
<name>TIM9_MESCR</name>
<evidence type="ECO:0000250" key="1"/>
<evidence type="ECO:0000305" key="2"/>
<accession>Q9XGX8</accession>
<gene>
    <name type="primary">TIM9</name>
</gene>
<organism>
    <name type="scientific">Mesembryanthemum crystallinum</name>
    <name type="common">Common ice plant</name>
    <name type="synonym">Cryophytum crystallinum</name>
    <dbReference type="NCBI Taxonomy" id="3544"/>
    <lineage>
        <taxon>Eukaryota</taxon>
        <taxon>Viridiplantae</taxon>
        <taxon>Streptophyta</taxon>
        <taxon>Embryophyta</taxon>
        <taxon>Tracheophyta</taxon>
        <taxon>Spermatophyta</taxon>
        <taxon>Magnoliopsida</taxon>
        <taxon>eudicotyledons</taxon>
        <taxon>Gunneridae</taxon>
        <taxon>Pentapetalae</taxon>
        <taxon>Caryophyllales</taxon>
        <taxon>Aizoaceae</taxon>
        <taxon>Mesembryanthemum</taxon>
        <taxon>Mesembryanthemum subgen. Cryophytum</taxon>
    </lineage>
</organism>
<proteinExistence type="inferred from homology"/>
<keyword id="KW-0143">Chaperone</keyword>
<keyword id="KW-1015">Disulfide bond</keyword>
<keyword id="KW-0472">Membrane</keyword>
<keyword id="KW-0479">Metal-binding</keyword>
<keyword id="KW-0496">Mitochondrion</keyword>
<keyword id="KW-0999">Mitochondrion inner membrane</keyword>
<keyword id="KW-0653">Protein transport</keyword>
<keyword id="KW-0811">Translocation</keyword>
<keyword id="KW-0813">Transport</keyword>
<keyword id="KW-0862">Zinc</keyword>
<reference key="1">
    <citation type="journal article" date="1999" name="FEBS Lett.">
        <title>The mitochondrial TIM22 preprotein translocase is highly conserved throughout the eukaryotic kingdom.</title>
        <authorList>
            <person name="Bauer M.F."/>
            <person name="Rothbauer U."/>
            <person name="Muehlenbein N."/>
            <person name="Smith R.J.H."/>
            <person name="Gerbitz K.-D."/>
            <person name="Neupert W."/>
            <person name="Brunner M."/>
            <person name="Hofmann S."/>
        </authorList>
    </citation>
    <scope>NUCLEOTIDE SEQUENCE [MRNA]</scope>
</reference>